<evidence type="ECO:0000255" key="1"/>
<evidence type="ECO:0000305" key="2"/>
<organism>
    <name type="scientific">Chlamydia pneumoniae</name>
    <name type="common">Chlamydophila pneumoniae</name>
    <dbReference type="NCBI Taxonomy" id="83558"/>
    <lineage>
        <taxon>Bacteria</taxon>
        <taxon>Pseudomonadati</taxon>
        <taxon>Chlamydiota</taxon>
        <taxon>Chlamydiia</taxon>
        <taxon>Chlamydiales</taxon>
        <taxon>Chlamydiaceae</taxon>
        <taxon>Chlamydia/Chlamydophila group</taxon>
        <taxon>Chlamydia</taxon>
    </lineage>
</organism>
<dbReference type="EMBL" id="AE001363">
    <property type="protein sequence ID" value="AAD18696.1"/>
    <property type="molecule type" value="Genomic_DNA"/>
</dbReference>
<dbReference type="EMBL" id="AE002161">
    <property type="protein sequence ID" value="AAF38069.1"/>
    <property type="molecule type" value="Genomic_DNA"/>
</dbReference>
<dbReference type="EMBL" id="BA000008">
    <property type="protein sequence ID" value="BAA98762.1"/>
    <property type="molecule type" value="Genomic_DNA"/>
</dbReference>
<dbReference type="EMBL" id="AE009440">
    <property type="protein sequence ID" value="AAP98507.1"/>
    <property type="molecule type" value="Genomic_DNA"/>
</dbReference>
<dbReference type="PIR" id="G72063">
    <property type="entry name" value="G72063"/>
</dbReference>
<dbReference type="PIR" id="H86559">
    <property type="entry name" value="H86559"/>
</dbReference>
<dbReference type="RefSeq" id="NP_224752.1">
    <property type="nucleotide sequence ID" value="NC_000922.1"/>
</dbReference>
<dbReference type="RefSeq" id="WP_010883194.1">
    <property type="nucleotide sequence ID" value="NZ_LN847257.1"/>
</dbReference>
<dbReference type="STRING" id="406984.CPK_ORF01070"/>
<dbReference type="GeneID" id="45050600"/>
<dbReference type="KEGG" id="cpa:CP_0196"/>
<dbReference type="KEGG" id="cpj:crpA"/>
<dbReference type="KEGG" id="cpn:CPn_0556"/>
<dbReference type="KEGG" id="cpt:CpB0578"/>
<dbReference type="PATRIC" id="fig|115713.3.peg.617"/>
<dbReference type="HOGENOM" id="CLU_1388099_0_0_0"/>
<dbReference type="OrthoDB" id="18131at2"/>
<dbReference type="Proteomes" id="UP000000583">
    <property type="component" value="Chromosome"/>
</dbReference>
<dbReference type="Proteomes" id="UP000000801">
    <property type="component" value="Chromosome"/>
</dbReference>
<dbReference type="GO" id="GO:0019867">
    <property type="term" value="C:outer membrane"/>
    <property type="evidence" value="ECO:0007669"/>
    <property type="project" value="InterPro"/>
</dbReference>
<dbReference type="InterPro" id="IPR008436">
    <property type="entry name" value="CRPA"/>
</dbReference>
<dbReference type="Pfam" id="PF05745">
    <property type="entry name" value="CRPA"/>
    <property type="match status" value="1"/>
</dbReference>
<proteinExistence type="predicted"/>
<protein>
    <recommendedName>
        <fullName>Sulfur-rich protein</fullName>
    </recommendedName>
    <alternativeName>
        <fullName>Cysteine-rich protein A</fullName>
    </alternativeName>
</protein>
<gene>
    <name type="primary">srp</name>
    <name type="synonym">crpA</name>
    <name type="ordered locus">CPn_0556</name>
    <name type="ordered locus">CP_0196</name>
    <name type="ordered locus">CPj0556</name>
    <name type="ordered locus">CpB0578</name>
</gene>
<sequence>MSSNLHPVGGTGTGAAAPESVLNIVEEIAASGSVTAGLQAITSSPGMVNLLIGWAKTKFIQPIRESKLFQSRACQITLLVLGILLVVAGLACMFIFHSQLGANAFWLIIPAAIGLIKLLVTSLCFDEACTSEKLMVFQKWAGVLEDQLDDGILNNSNKIFGHVKTEGNTSRATTPVLNDGRGTPVLSPLVSKIARV</sequence>
<comment type="subcellular location">
    <subcellularLocation>
        <location evidence="2">Membrane</location>
        <topology evidence="2">Multi-pass membrane protein</topology>
    </subcellularLocation>
</comment>
<name>SRP_CHLPN</name>
<accession>Q9Z7Z6</accession>
<accession>Q7AIL4</accession>
<accession>Q7BX89</accession>
<accession>Q7DEY9</accession>
<feature type="chain" id="PRO_0000248632" description="Sulfur-rich protein">
    <location>
        <begin position="1"/>
        <end position="196"/>
    </location>
</feature>
<feature type="transmembrane region" description="Helical" evidence="1">
    <location>
        <begin position="34"/>
        <end position="54"/>
    </location>
</feature>
<feature type="transmembrane region" description="Helical" evidence="1">
    <location>
        <begin position="76"/>
        <end position="96"/>
    </location>
</feature>
<feature type="transmembrane region" description="Helical" evidence="1">
    <location>
        <begin position="105"/>
        <end position="125"/>
    </location>
</feature>
<keyword id="KW-0472">Membrane</keyword>
<keyword id="KW-0812">Transmembrane</keyword>
<keyword id="KW-1133">Transmembrane helix</keyword>
<reference key="1">
    <citation type="journal article" date="1999" name="Nat. Genet.">
        <title>Comparative genomes of Chlamydia pneumoniae and C. trachomatis.</title>
        <authorList>
            <person name="Kalman S."/>
            <person name="Mitchell W.P."/>
            <person name="Marathe R."/>
            <person name="Lammel C.J."/>
            <person name="Fan J."/>
            <person name="Hyman R.W."/>
            <person name="Olinger L."/>
            <person name="Grimwood J."/>
            <person name="Davis R.W."/>
            <person name="Stephens R.S."/>
        </authorList>
    </citation>
    <scope>NUCLEOTIDE SEQUENCE [LARGE SCALE GENOMIC DNA]</scope>
    <source>
        <strain>CWL029</strain>
    </source>
</reference>
<reference key="2">
    <citation type="journal article" date="2000" name="Nucleic Acids Res.">
        <title>Comparison of whole genome sequences of Chlamydia pneumoniae J138 from Japan and CWL029 from USA.</title>
        <authorList>
            <person name="Shirai M."/>
            <person name="Hirakawa H."/>
            <person name="Kimoto M."/>
            <person name="Tabuchi M."/>
            <person name="Kishi F."/>
            <person name="Ouchi K."/>
            <person name="Shiba T."/>
            <person name="Ishii K."/>
            <person name="Hattori M."/>
            <person name="Kuhara S."/>
            <person name="Nakazawa T."/>
        </authorList>
    </citation>
    <scope>NUCLEOTIDE SEQUENCE [LARGE SCALE GENOMIC DNA]</scope>
    <source>
        <strain>J138</strain>
    </source>
</reference>
<reference key="3">
    <citation type="submission" date="2002-05" db="EMBL/GenBank/DDBJ databases">
        <title>The genome sequence of Chlamydia pneumoniae TW183 and comparison with other Chlamydia strains based on whole genome sequence analysis.</title>
        <authorList>
            <person name="Geng M.M."/>
            <person name="Schuhmacher A."/>
            <person name="Muehldorfer I."/>
            <person name="Bensch K.W."/>
            <person name="Schaefer K.P."/>
            <person name="Schneider S."/>
            <person name="Pohl T."/>
            <person name="Essig A."/>
            <person name="Marre R."/>
            <person name="Melchers K."/>
        </authorList>
    </citation>
    <scope>NUCLEOTIDE SEQUENCE [LARGE SCALE GENOMIC DNA]</scope>
    <source>
        <strain>TW-183</strain>
    </source>
</reference>
<reference key="4">
    <citation type="journal article" date="2000" name="Nucleic Acids Res.">
        <title>Genome sequences of Chlamydia trachomatis MoPn and Chlamydia pneumoniae AR39.</title>
        <authorList>
            <person name="Read T.D."/>
            <person name="Brunham R.C."/>
            <person name="Shen C."/>
            <person name="Gill S.R."/>
            <person name="Heidelberg J.F."/>
            <person name="White O."/>
            <person name="Hickey E.K."/>
            <person name="Peterson J.D."/>
            <person name="Utterback T.R."/>
            <person name="Berry K.J."/>
            <person name="Bass S."/>
            <person name="Linher K.D."/>
            <person name="Weidman J.F."/>
            <person name="Khouri H.M."/>
            <person name="Craven B."/>
            <person name="Bowman C."/>
            <person name="Dodson R.J."/>
            <person name="Gwinn M.L."/>
            <person name="Nelson W.C."/>
            <person name="DeBoy R.T."/>
            <person name="Kolonay J.F."/>
            <person name="McClarty G."/>
            <person name="Salzberg S.L."/>
            <person name="Eisen J.A."/>
            <person name="Fraser C.M."/>
        </authorList>
    </citation>
    <scope>NUCLEOTIDE SEQUENCE [LARGE SCALE GENOMIC DNA]</scope>
    <source>
        <strain>AR39</strain>
    </source>
</reference>